<gene>
    <name type="primary">ZIM17</name>
    <name type="ORF">AWRI1631_140250</name>
</gene>
<comment type="function">
    <text evidence="1">Involved in protein import into mitochondria. Acts as a Hsp70-specific chaperone that prevents self-aggregation of the matrix Hsp70 chaperones SSC1 (mtHSP70) and SSQ1, thereby maintaining their function in mitochondrial protein import and Fe/S protein biosynthesis. May act together with PAM18 as co-chaperone to facilitate recognition and folding of imported proteins by SSC1 in the mitochondrial matrix (By similarity).</text>
</comment>
<comment type="cofactor">
    <cofactor evidence="1">
        <name>Zn(2+)</name>
        <dbReference type="ChEBI" id="CHEBI:29105"/>
    </cofactor>
    <text evidence="1">Binds 1 zinc ion per subunit.</text>
</comment>
<comment type="subunit">
    <text evidence="1">Interacts with SSC1; binds to the nucleotide-free state as well as to the ADP- or ATP-bound state of SSC1.</text>
</comment>
<comment type="subcellular location">
    <subcellularLocation>
        <location evidence="1">Mitochondrion inner membrane</location>
        <topology evidence="1">Peripheral membrane protein</topology>
        <orientation evidence="1">Matrix side</orientation>
    </subcellularLocation>
    <text evidence="1">Soluble matrix protein loosely associated with the inner membrane.</text>
</comment>
<comment type="sequence caution" evidence="3">
    <conflict type="erroneous initiation">
        <sequence resource="EMBL-CDS" id="EDZ69887"/>
    </conflict>
</comment>
<name>ZIM17_YEAS6</name>
<feature type="transit peptide" description="Mitochondrion" evidence="1">
    <location>
        <begin position="1"/>
        <end position="47"/>
    </location>
</feature>
<feature type="chain" id="PRO_0000377663" description="Mitochondrial protein import protein ZIM17">
    <location>
        <begin position="48"/>
        <end position="174"/>
    </location>
</feature>
<feature type="zinc finger region" description="DNL-type" evidence="2">
    <location>
        <begin position="64"/>
        <end position="159"/>
    </location>
</feature>
<feature type="binding site" evidence="2">
    <location>
        <position position="75"/>
    </location>
    <ligand>
        <name>Zn(2+)</name>
        <dbReference type="ChEBI" id="CHEBI:29105"/>
    </ligand>
</feature>
<feature type="binding site" evidence="2">
    <location>
        <position position="78"/>
    </location>
    <ligand>
        <name>Zn(2+)</name>
        <dbReference type="ChEBI" id="CHEBI:29105"/>
    </ligand>
</feature>
<feature type="binding site" evidence="2">
    <location>
        <position position="100"/>
    </location>
    <ligand>
        <name>Zn(2+)</name>
        <dbReference type="ChEBI" id="CHEBI:29105"/>
    </ligand>
</feature>
<feature type="binding site" evidence="2">
    <location>
        <position position="103"/>
    </location>
    <ligand>
        <name>Zn(2+)</name>
        <dbReference type="ChEBI" id="CHEBI:29105"/>
    </ligand>
</feature>
<dbReference type="EMBL" id="ABSV01001936">
    <property type="protein sequence ID" value="EDZ69887.1"/>
    <property type="status" value="ALT_INIT"/>
    <property type="molecule type" value="Genomic_DNA"/>
</dbReference>
<dbReference type="SMR" id="B5VQB0"/>
<dbReference type="OrthoDB" id="39586at4893"/>
<dbReference type="Proteomes" id="UP000008988">
    <property type="component" value="Unassembled WGS sequence"/>
</dbReference>
<dbReference type="GO" id="GO:0005743">
    <property type="term" value="C:mitochondrial inner membrane"/>
    <property type="evidence" value="ECO:0007669"/>
    <property type="project" value="UniProtKB-SubCell"/>
</dbReference>
<dbReference type="GO" id="GO:0051087">
    <property type="term" value="F:protein-folding chaperone binding"/>
    <property type="evidence" value="ECO:0007669"/>
    <property type="project" value="TreeGrafter"/>
</dbReference>
<dbReference type="GO" id="GO:0008270">
    <property type="term" value="F:zinc ion binding"/>
    <property type="evidence" value="ECO:0007669"/>
    <property type="project" value="UniProtKB-KW"/>
</dbReference>
<dbReference type="GO" id="GO:0006457">
    <property type="term" value="P:protein folding"/>
    <property type="evidence" value="ECO:0007669"/>
    <property type="project" value="TreeGrafter"/>
</dbReference>
<dbReference type="GO" id="GO:0030150">
    <property type="term" value="P:protein import into mitochondrial matrix"/>
    <property type="evidence" value="ECO:0007669"/>
    <property type="project" value="TreeGrafter"/>
</dbReference>
<dbReference type="GO" id="GO:0050821">
    <property type="term" value="P:protein stabilization"/>
    <property type="evidence" value="ECO:0007669"/>
    <property type="project" value="TreeGrafter"/>
</dbReference>
<dbReference type="InterPro" id="IPR024158">
    <property type="entry name" value="Mt_import_TIM15"/>
</dbReference>
<dbReference type="InterPro" id="IPR007853">
    <property type="entry name" value="Znf_DNL-typ"/>
</dbReference>
<dbReference type="PANTHER" id="PTHR20922">
    <property type="entry name" value="DNL-TYPE ZINC FINGER PROTEIN"/>
    <property type="match status" value="1"/>
</dbReference>
<dbReference type="PANTHER" id="PTHR20922:SF13">
    <property type="entry name" value="DNL-TYPE ZINC FINGER PROTEIN"/>
    <property type="match status" value="1"/>
</dbReference>
<dbReference type="Pfam" id="PF05180">
    <property type="entry name" value="zf-DNL"/>
    <property type="match status" value="1"/>
</dbReference>
<dbReference type="PROSITE" id="PS51501">
    <property type="entry name" value="ZF_DNL"/>
    <property type="match status" value="1"/>
</dbReference>
<accession>B5VQB0</accession>
<keyword id="KW-0143">Chaperone</keyword>
<keyword id="KW-0472">Membrane</keyword>
<keyword id="KW-0479">Metal-binding</keyword>
<keyword id="KW-0496">Mitochondrion</keyword>
<keyword id="KW-0999">Mitochondrion inner membrane</keyword>
<keyword id="KW-0653">Protein transport</keyword>
<keyword id="KW-0809">Transit peptide</keyword>
<keyword id="KW-0813">Transport</keyword>
<keyword id="KW-0862">Zinc</keyword>
<keyword id="KW-0863">Zinc-finger</keyword>
<reference key="1">
    <citation type="journal article" date="2008" name="FEMS Yeast Res.">
        <title>Comparative genome analysis of a Saccharomyces cerevisiae wine strain.</title>
        <authorList>
            <person name="Borneman A.R."/>
            <person name="Forgan A.H."/>
            <person name="Pretorius I.S."/>
            <person name="Chambers P.J."/>
        </authorList>
    </citation>
    <scope>NUCLEOTIDE SEQUENCE [LARGE SCALE GENOMIC DNA]</scope>
    <source>
        <strain>AWRI1631</strain>
    </source>
</reference>
<sequence length="174" mass="19855">MIPRTRTLLQSKIPITRYFARCWAPRVRYNVCRTLPAAALHTNIIAHNEVKKDDKKVHLGSFKVDKPKMMIAFTCKKCNTRSSHTMSKQAYEKGTVLISCPHCKVRHLIADHLKIFHDHHVTVEQLMKANGEQVSQDVGDLEFEDIPDSLKDVLGKYAKNNSENASQLPHPSQK</sequence>
<evidence type="ECO:0000250" key="1"/>
<evidence type="ECO:0000255" key="2">
    <source>
        <dbReference type="PROSITE-ProRule" id="PRU00834"/>
    </source>
</evidence>
<evidence type="ECO:0000305" key="3"/>
<protein>
    <recommendedName>
        <fullName>Mitochondrial protein import protein ZIM17</fullName>
    </recommendedName>
    <alternativeName>
        <fullName>Mitochondrial import inner membrane translocase subunit TIM15</fullName>
    </alternativeName>
    <alternativeName>
        <fullName>mtHsp70 escort protein 1</fullName>
    </alternativeName>
    <alternativeName>
        <fullName>mtHsp70-associated motor and chaperone protein TIM15/ZIM17</fullName>
        <shortName>MMC</shortName>
    </alternativeName>
</protein>
<proteinExistence type="inferred from homology"/>
<organism>
    <name type="scientific">Saccharomyces cerevisiae (strain AWRI1631)</name>
    <name type="common">Baker's yeast</name>
    <dbReference type="NCBI Taxonomy" id="545124"/>
    <lineage>
        <taxon>Eukaryota</taxon>
        <taxon>Fungi</taxon>
        <taxon>Dikarya</taxon>
        <taxon>Ascomycota</taxon>
        <taxon>Saccharomycotina</taxon>
        <taxon>Saccharomycetes</taxon>
        <taxon>Saccharomycetales</taxon>
        <taxon>Saccharomycetaceae</taxon>
        <taxon>Saccharomyces</taxon>
    </lineage>
</organism>